<keyword id="KW-0002">3D-structure</keyword>
<keyword id="KW-0965">Cell junction</keyword>
<keyword id="KW-0175">Coiled coil</keyword>
<keyword id="KW-0963">Cytoplasm</keyword>
<keyword id="KW-0206">Cytoskeleton</keyword>
<keyword id="KW-0417">Keratinization</keyword>
<keyword id="KW-0597">Phosphoprotein</keyword>
<keyword id="KW-1267">Proteomics identification</keyword>
<keyword id="KW-1185">Reference proteome</keyword>
<keyword id="KW-0677">Repeat</keyword>
<keyword id="KW-0728">SH3 domain</keyword>
<protein>
    <recommendedName>
        <fullName>Envoplakin</fullName>
    </recommendedName>
    <alternativeName>
        <fullName>210 kDa cornified envelope precursor protein</fullName>
    </alternativeName>
    <alternativeName>
        <fullName>210 kDa paraneoplastic pemphigus antigen</fullName>
    </alternativeName>
    <alternativeName>
        <fullName>p210</fullName>
    </alternativeName>
</protein>
<dbReference type="EMBL" id="U53786">
    <property type="protein sequence ID" value="AAC64662.1"/>
    <property type="molecule type" value="mRNA"/>
</dbReference>
<dbReference type="EMBL" id="U72849">
    <property type="protein sequence ID" value="AAD00186.1"/>
    <property type="molecule type" value="Genomic_DNA"/>
</dbReference>
<dbReference type="EMBL" id="U72843">
    <property type="protein sequence ID" value="AAD00186.1"/>
    <property type="status" value="JOINED"/>
    <property type="molecule type" value="Genomic_DNA"/>
</dbReference>
<dbReference type="EMBL" id="U72845">
    <property type="protein sequence ID" value="AAD00186.1"/>
    <property type="status" value="JOINED"/>
    <property type="molecule type" value="Genomic_DNA"/>
</dbReference>
<dbReference type="EMBL" id="U72846">
    <property type="protein sequence ID" value="AAD00186.1"/>
    <property type="status" value="JOINED"/>
    <property type="molecule type" value="Genomic_DNA"/>
</dbReference>
<dbReference type="EMBL" id="U72847">
    <property type="protein sequence ID" value="AAD00186.1"/>
    <property type="status" value="JOINED"/>
    <property type="molecule type" value="Genomic_DNA"/>
</dbReference>
<dbReference type="EMBL" id="U72848">
    <property type="protein sequence ID" value="AAD00186.1"/>
    <property type="status" value="JOINED"/>
    <property type="molecule type" value="Genomic_DNA"/>
</dbReference>
<dbReference type="EMBL" id="AC040980">
    <property type="status" value="NOT_ANNOTATED_CDS"/>
    <property type="molecule type" value="Genomic_DNA"/>
</dbReference>
<dbReference type="EMBL" id="BC126103">
    <property type="protein sequence ID" value="AAI26104.1"/>
    <property type="molecule type" value="mRNA"/>
</dbReference>
<dbReference type="EMBL" id="BC126105">
    <property type="protein sequence ID" value="AAI26106.1"/>
    <property type="molecule type" value="mRNA"/>
</dbReference>
<dbReference type="CCDS" id="CCDS11737.1"/>
<dbReference type="RefSeq" id="NP_001307676.1">
    <property type="nucleotide sequence ID" value="NM_001320747.1"/>
</dbReference>
<dbReference type="RefSeq" id="NP_001979.2">
    <property type="nucleotide sequence ID" value="NM_001988.4"/>
</dbReference>
<dbReference type="PDB" id="4QMD">
    <property type="method" value="X-ray"/>
    <property type="resolution" value="1.60 A"/>
    <property type="chains" value="A/B=1822-2014"/>
</dbReference>
<dbReference type="PDBsum" id="4QMD"/>
<dbReference type="SMR" id="Q92817"/>
<dbReference type="BioGRID" id="108426">
    <property type="interactions" value="126"/>
</dbReference>
<dbReference type="FunCoup" id="Q92817">
    <property type="interactions" value="385"/>
</dbReference>
<dbReference type="IntAct" id="Q92817">
    <property type="interactions" value="76"/>
</dbReference>
<dbReference type="MINT" id="Q92817"/>
<dbReference type="STRING" id="9606.ENSP00000465630"/>
<dbReference type="GlyGen" id="Q92817">
    <property type="glycosylation" value="2 sites, 1 O-linked glycan (2 sites)"/>
</dbReference>
<dbReference type="iPTMnet" id="Q92817"/>
<dbReference type="PhosphoSitePlus" id="Q92817"/>
<dbReference type="SwissPalm" id="Q92817"/>
<dbReference type="BioMuta" id="EVPL"/>
<dbReference type="DMDM" id="296439359"/>
<dbReference type="jPOST" id="Q92817"/>
<dbReference type="MassIVE" id="Q92817"/>
<dbReference type="PaxDb" id="9606-ENSP00000301607"/>
<dbReference type="PeptideAtlas" id="Q92817"/>
<dbReference type="PRIDE" id="Q92817"/>
<dbReference type="ProteomicsDB" id="75494"/>
<dbReference type="Pumba" id="Q92817"/>
<dbReference type="Antibodypedia" id="46112">
    <property type="antibodies" value="66 antibodies from 18 providers"/>
</dbReference>
<dbReference type="DNASU" id="2125"/>
<dbReference type="Ensembl" id="ENST00000301607.8">
    <property type="protein sequence ID" value="ENSP00000301607.3"/>
    <property type="gene ID" value="ENSG00000167880.8"/>
</dbReference>
<dbReference type="GeneID" id="2125"/>
<dbReference type="KEGG" id="hsa:2125"/>
<dbReference type="MANE-Select" id="ENST00000301607.8">
    <property type="protein sequence ID" value="ENSP00000301607.3"/>
    <property type="RefSeq nucleotide sequence ID" value="NM_001988.4"/>
    <property type="RefSeq protein sequence ID" value="NP_001979.2"/>
</dbReference>
<dbReference type="UCSC" id="uc002jqi.3">
    <property type="organism name" value="human"/>
</dbReference>
<dbReference type="AGR" id="HGNC:3503"/>
<dbReference type="CTD" id="2125"/>
<dbReference type="DisGeNET" id="2125"/>
<dbReference type="GeneCards" id="EVPL"/>
<dbReference type="HGNC" id="HGNC:3503">
    <property type="gene designation" value="EVPL"/>
</dbReference>
<dbReference type="HPA" id="ENSG00000167880">
    <property type="expression patterns" value="Tissue enhanced (esophagus, skin, vagina)"/>
</dbReference>
<dbReference type="MIM" id="601590">
    <property type="type" value="gene"/>
</dbReference>
<dbReference type="neXtProt" id="NX_Q92817"/>
<dbReference type="OpenTargets" id="ENSG00000167880"/>
<dbReference type="PharmGKB" id="PA27916"/>
<dbReference type="VEuPathDB" id="HostDB:ENSG00000167880"/>
<dbReference type="eggNOG" id="KOG0516">
    <property type="taxonomic scope" value="Eukaryota"/>
</dbReference>
<dbReference type="GeneTree" id="ENSGT00940000153578"/>
<dbReference type="HOGENOM" id="CLU_001780_0_0_1"/>
<dbReference type="InParanoid" id="Q92817"/>
<dbReference type="OMA" id="TEHACGA"/>
<dbReference type="OrthoDB" id="9945740at2759"/>
<dbReference type="PAN-GO" id="Q92817">
    <property type="GO annotations" value="6 GO annotations based on evolutionary models"/>
</dbReference>
<dbReference type="PhylomeDB" id="Q92817"/>
<dbReference type="TreeFam" id="TF342779"/>
<dbReference type="PathwayCommons" id="Q92817"/>
<dbReference type="Reactome" id="R-HSA-6809371">
    <property type="pathway name" value="Formation of the cornified envelope"/>
</dbReference>
<dbReference type="SignaLink" id="Q92817"/>
<dbReference type="BioGRID-ORCS" id="2125">
    <property type="hits" value="17 hits in 1148 CRISPR screens"/>
</dbReference>
<dbReference type="ChiTaRS" id="EVPL">
    <property type="organism name" value="human"/>
</dbReference>
<dbReference type="EvolutionaryTrace" id="Q92817"/>
<dbReference type="GeneWiki" id="Envoplakin"/>
<dbReference type="GenomeRNAi" id="2125"/>
<dbReference type="Pharos" id="Q92817">
    <property type="development level" value="Tbio"/>
</dbReference>
<dbReference type="PRO" id="PR:Q92817"/>
<dbReference type="Proteomes" id="UP000005640">
    <property type="component" value="Chromosome 17"/>
</dbReference>
<dbReference type="RNAct" id="Q92817">
    <property type="molecule type" value="protein"/>
</dbReference>
<dbReference type="Bgee" id="ENSG00000167880">
    <property type="expression patterns" value="Expressed in lower esophagus mucosa and 136 other cell types or tissues"/>
</dbReference>
<dbReference type="ExpressionAtlas" id="Q92817">
    <property type="expression patterns" value="baseline and differential"/>
</dbReference>
<dbReference type="GO" id="GO:0001533">
    <property type="term" value="C:cornified envelope"/>
    <property type="evidence" value="ECO:0000314"/>
    <property type="project" value="UniProtKB"/>
</dbReference>
<dbReference type="GO" id="GO:0005829">
    <property type="term" value="C:cytosol"/>
    <property type="evidence" value="ECO:0000314"/>
    <property type="project" value="HPA"/>
</dbReference>
<dbReference type="GO" id="GO:0030057">
    <property type="term" value="C:desmosome"/>
    <property type="evidence" value="ECO:0007669"/>
    <property type="project" value="UniProtKB-SubCell"/>
</dbReference>
<dbReference type="GO" id="GO:0070062">
    <property type="term" value="C:extracellular exosome"/>
    <property type="evidence" value="ECO:0007005"/>
    <property type="project" value="UniProtKB"/>
</dbReference>
<dbReference type="GO" id="GO:0045111">
    <property type="term" value="C:intermediate filament cytoskeleton"/>
    <property type="evidence" value="ECO:0000314"/>
    <property type="project" value="HPA"/>
</dbReference>
<dbReference type="GO" id="GO:0016020">
    <property type="term" value="C:membrane"/>
    <property type="evidence" value="ECO:0000318"/>
    <property type="project" value="GO_Central"/>
</dbReference>
<dbReference type="GO" id="GO:0045296">
    <property type="term" value="F:cadherin binding"/>
    <property type="evidence" value="ECO:0007005"/>
    <property type="project" value="BHF-UCL"/>
</dbReference>
<dbReference type="GO" id="GO:0005198">
    <property type="term" value="F:structural molecule activity"/>
    <property type="evidence" value="ECO:0000318"/>
    <property type="project" value="GO_Central"/>
</dbReference>
<dbReference type="GO" id="GO:0008544">
    <property type="term" value="P:epidermis development"/>
    <property type="evidence" value="ECO:0000304"/>
    <property type="project" value="ProtInc"/>
</dbReference>
<dbReference type="GO" id="GO:0045104">
    <property type="term" value="P:intermediate filament cytoskeleton organization"/>
    <property type="evidence" value="ECO:0000318"/>
    <property type="project" value="GO_Central"/>
</dbReference>
<dbReference type="GO" id="GO:0031424">
    <property type="term" value="P:keratinization"/>
    <property type="evidence" value="ECO:0007669"/>
    <property type="project" value="UniProtKB-KW"/>
</dbReference>
<dbReference type="GO" id="GO:0030216">
    <property type="term" value="P:keratinocyte differentiation"/>
    <property type="evidence" value="ECO:0000314"/>
    <property type="project" value="UniProtKB"/>
</dbReference>
<dbReference type="GO" id="GO:0018149">
    <property type="term" value="P:peptide cross-linking"/>
    <property type="evidence" value="ECO:0000314"/>
    <property type="project" value="UniProtKB"/>
</dbReference>
<dbReference type="GO" id="GO:0002786">
    <property type="term" value="P:regulation of antibacterial peptide production"/>
    <property type="evidence" value="ECO:0007669"/>
    <property type="project" value="Ensembl"/>
</dbReference>
<dbReference type="GO" id="GO:0042060">
    <property type="term" value="P:wound healing"/>
    <property type="evidence" value="ECO:0000318"/>
    <property type="project" value="GO_Central"/>
</dbReference>
<dbReference type="FunFam" id="1.20.58.60:FF:000178">
    <property type="entry name" value="Envoplakin a"/>
    <property type="match status" value="1"/>
</dbReference>
<dbReference type="FunFam" id="3.90.1290.10:FF:000010">
    <property type="entry name" value="Envoplakin a"/>
    <property type="match status" value="1"/>
</dbReference>
<dbReference type="FunFam" id="3.30.160.780:FF:000002">
    <property type="entry name" value="Envoplakin b"/>
    <property type="match status" value="1"/>
</dbReference>
<dbReference type="FunFam" id="1.20.58.60:FF:000142">
    <property type="entry name" value="Envoplakin like"/>
    <property type="match status" value="1"/>
</dbReference>
<dbReference type="FunFam" id="1.20.58.60:FF:000109">
    <property type="entry name" value="Periplakin"/>
    <property type="match status" value="1"/>
</dbReference>
<dbReference type="FunFam" id="2.30.30.40:FF:000088">
    <property type="entry name" value="Periplakin"/>
    <property type="match status" value="1"/>
</dbReference>
<dbReference type="FunFam" id="1.20.58.60:FF:000030">
    <property type="entry name" value="Short stop, isoform K"/>
    <property type="match status" value="1"/>
</dbReference>
<dbReference type="Gene3D" id="1.20.58.60">
    <property type="match status" value="4"/>
</dbReference>
<dbReference type="Gene3D" id="3.30.160.780">
    <property type="match status" value="1"/>
</dbReference>
<dbReference type="Gene3D" id="3.90.1290.10">
    <property type="entry name" value="Plakin repeat"/>
    <property type="match status" value="1"/>
</dbReference>
<dbReference type="Gene3D" id="2.30.30.40">
    <property type="entry name" value="SH3 Domains"/>
    <property type="match status" value="1"/>
</dbReference>
<dbReference type="InterPro" id="IPR041615">
    <property type="entry name" value="Desmoplakin_SH3"/>
</dbReference>
<dbReference type="InterPro" id="IPR043197">
    <property type="entry name" value="Plakin"/>
</dbReference>
<dbReference type="InterPro" id="IPR035915">
    <property type="entry name" value="Plakin_repeat_sf"/>
</dbReference>
<dbReference type="InterPro" id="IPR001101">
    <property type="entry name" value="Plectin_repeat"/>
</dbReference>
<dbReference type="InterPro" id="IPR001452">
    <property type="entry name" value="SH3_domain"/>
</dbReference>
<dbReference type="InterPro" id="IPR018159">
    <property type="entry name" value="Spectrin/alpha-actinin"/>
</dbReference>
<dbReference type="InterPro" id="IPR055419">
    <property type="entry name" value="Spectrin_PEPL/EVPL"/>
</dbReference>
<dbReference type="PANTHER" id="PTHR23169">
    <property type="entry name" value="ENVOPLAKIN"/>
    <property type="match status" value="1"/>
</dbReference>
<dbReference type="PANTHER" id="PTHR23169:SF7">
    <property type="entry name" value="ENVOPLAKIN"/>
    <property type="match status" value="1"/>
</dbReference>
<dbReference type="Pfam" id="PF00681">
    <property type="entry name" value="Plectin"/>
    <property type="match status" value="4"/>
</dbReference>
<dbReference type="Pfam" id="PF17902">
    <property type="entry name" value="SH3_10"/>
    <property type="match status" value="1"/>
</dbReference>
<dbReference type="Pfam" id="PF23160">
    <property type="entry name" value="Spectrin_1st_PEPL"/>
    <property type="match status" value="1"/>
</dbReference>
<dbReference type="SMART" id="SM00250">
    <property type="entry name" value="PLEC"/>
    <property type="match status" value="8"/>
</dbReference>
<dbReference type="SMART" id="SM00150">
    <property type="entry name" value="SPEC"/>
    <property type="match status" value="1"/>
</dbReference>
<dbReference type="SUPFAM" id="SSF75399">
    <property type="entry name" value="Plakin repeat"/>
    <property type="match status" value="2"/>
</dbReference>
<dbReference type="SUPFAM" id="SSF46966">
    <property type="entry name" value="Spectrin repeat"/>
    <property type="match status" value="1"/>
</dbReference>
<dbReference type="PROSITE" id="PS50002">
    <property type="entry name" value="SH3"/>
    <property type="match status" value="1"/>
</dbReference>
<sequence>MFKGLSKGSQGKGSPKGSPAKGSPKGSPSRHSRAATQELALLISRMQANADQVERDILETQKRLQQDRLNSEQSQALQHQQETGRSLKEAEVLLKDLFLDVDKARRLKHPQAEEIEKDIKQLHERVTQECAEYRALYEKMVLPPDVGPRVDWARVLEQKQKQVCAGQYGPGMAELEQQIAEHNILQKEIDAYGQQLRSLVGPDAATIRSQYRDLLKAASWRGQSLGSLYTHLQGCTRQLSALAEQQRRILQQDWSDLMADPAGVRREYEHFKQHELLSQEQSVNQLEDDGERMVELRHPAVGPIQAHQEALKMEWQNFLNLCICQETQLQHVEDYRRFQEEADSVSQTLAKLNSNLDAKYSPAPGGPPGAPTELLQQLEAEEKRLAVTERATGDLQRRSRDVAPLPQRRNPPQQPLHVDSICDWDSGEVQLLQGERYKLVDNTDPHAWVVQGPGGETKRAPAACFCIPAPDPDAVARASRLASELQALKQKLATVQSRLKASAVESLRPSQQAPSGSDLANPQAQKLLTQMTRLDGDLGQIERQVLAWARAPLSRPTPLEDLEGRIHSHEGTAQRLQSLGTEKETAQKECEAFLSTRPVGPAALQLPVALNSVKNKFSDVQVLCSLYGEKAKAALDLERQIQDADRVIRGFEATLVQEAPIPAEPGALQERVSELQRQRRELLEQQTCVLRLHRALKASEHACAALQNNFQEFCQDLPRQQRQVRALTDRYHAVGDQLDLREKVVQDAALTYQQFKNCKDNLSSWLEHLPRSQVRPSDGPSQIAYKLQAQKRLTQEIQSRERDRATASHLSQALQAALQDYELQADTYRCSLEPTLAVSAPKRPRVAPLQESIQAQEKNLAKAYTEVAAAQQQLLQQLEFARKMLEKKELSEDIRRTHDAKQGSESPAQAGRESEALKAQLEEERKRVARVQHELEAQRSQLLQLRTQRPLERLEEKEVVEFYRDPQLEGSLSRVKAQVEEEGKRRAGLQADLEVAAQKVVQLESKRKTMQPHLLTKEVTQVERDPGLDSQAAQLRIQIQQLRGEDAVISARLEGLKKELLALEKREVDVKEKVVVKEVVKVEKNLEMVKAAQALRLQMEEDAARRKQAEEAVAKLQARIEDLERAISSVEPKVIVKEVKKVEQDPGLLQESSRLRSLLEEERTKNATLARELSDLHSKYSVVEKQRPKVQLQERVHEIFQVDPETEQEITRLKAKLQEMAGKRSGVEKEVEKLLPDLEVLRAQKPTVEYKEVTQEVVRHERSPEVLREIDRLKAQLNELVNSHGRSQEQLIRLQGERDEWRRERAKVETKTVSKEVVRHEKDPVLEKEAERLRQEVREAAQKRRAAEDAVYELQSKRLLLERRKPEEKVVVQEVVVTQKDPKLREEHSRLSGSLDEEVGRRRQLELEVQQLRAGVEEQEGLLSFQEDRSKKLAVERELRQLTLRIQELEKRPPTVQEKIIMEEVVKLEKDPDLEKSTEALRWDLDQEKTQVTELNRECKNLQVQIDVLQKAKSQEKTIYKEVIRVQKDRVLEDERARVWEMLNRERTARQAREEEARRLRERIDRAETLGRTWSREESELQRARDQADQECGRLQQELRALERQKQQQTLQLQEESKLLSQKTESERQKAAQRGQELSRLEAAILREKDQIYEKERTLRDLHAKVSREELSQETQTRETNLSTKISILEPETGKDMSPYEAYKRGIIDRGQYLQLQELECDWEEVTTSGPCGEESVLLDRKSGKQYSIEAALRCRRISKEEYHLYKDGHLPISEFALLVAGETKPSSSLSIGSIISKSPLASPAPQSTSFFSPSFSLGLGDDSFPIAGIYDTTTDNKCSIKTAVAKNMLDPITGQKLLEAQAATGGIVDLLSRERYSVHKAMERGLIENTSTQRLLNAQKAFTGIEDPVTKKRLSVGEAVQKGWMPRESVLPHLQVQHLTGGLIDPKRTGRIPIQQALLSGMISEELAQLLQDESSYEKDLTDPISKERLSYKEAMGRCRKDPLSGLLLLPAALEGYRCYRSASPTVPRSLR</sequence>
<reference key="1">
    <citation type="journal article" date="1996" name="J. Cell Biol.">
        <title>Envoplakin, a novel precursor of the cornified envelope that has homology to desmoplakin.</title>
        <authorList>
            <person name="Ruhrberg C."/>
            <person name="Hajibagheri M.A.N."/>
            <person name="Simon M."/>
            <person name="Dooley T.P."/>
            <person name="Watt F.M."/>
        </authorList>
    </citation>
    <scope>NUCLEOTIDE SEQUENCE [MRNA]</scope>
    <source>
        <tissue>Keratinocyte</tissue>
    </source>
</reference>
<reference key="2">
    <citation type="journal article" date="1999" name="Genomics">
        <title>Envoplakin, a possible candidate gene for focal NEPPK/esophageal cancer (TOC): the integration of genetic and physical maps of the TOC region on 17q25.</title>
        <authorList>
            <person name="Risk J.M."/>
            <person name="Ruhrberg C."/>
            <person name="Hennies H.-C."/>
            <person name="Mills H.S."/>
            <person name="Di Colandrea T."/>
            <person name="Evans K.E."/>
            <person name="Ellis A."/>
            <person name="Watt F.M."/>
            <person name="Bishop D.T."/>
            <person name="Spurr N.K."/>
            <person name="Stevens H.P."/>
            <person name="Leigh I.M."/>
            <person name="Reis A."/>
            <person name="Kelsell D.P."/>
            <person name="Field J.K."/>
        </authorList>
    </citation>
    <scope>NUCLEOTIDE SEQUENCE [GENOMIC DNA]</scope>
</reference>
<reference key="3">
    <citation type="journal article" date="2006" name="Nature">
        <title>DNA sequence of human chromosome 17 and analysis of rearrangement in the human lineage.</title>
        <authorList>
            <person name="Zody M.C."/>
            <person name="Garber M."/>
            <person name="Adams D.J."/>
            <person name="Sharpe T."/>
            <person name="Harrow J."/>
            <person name="Lupski J.R."/>
            <person name="Nicholson C."/>
            <person name="Searle S.M."/>
            <person name="Wilming L."/>
            <person name="Young S.K."/>
            <person name="Abouelleil A."/>
            <person name="Allen N.R."/>
            <person name="Bi W."/>
            <person name="Bloom T."/>
            <person name="Borowsky M.L."/>
            <person name="Bugalter B.E."/>
            <person name="Butler J."/>
            <person name="Chang J.L."/>
            <person name="Chen C.-K."/>
            <person name="Cook A."/>
            <person name="Corum B."/>
            <person name="Cuomo C.A."/>
            <person name="de Jong P.J."/>
            <person name="DeCaprio D."/>
            <person name="Dewar K."/>
            <person name="FitzGerald M."/>
            <person name="Gilbert J."/>
            <person name="Gibson R."/>
            <person name="Gnerre S."/>
            <person name="Goldstein S."/>
            <person name="Grafham D.V."/>
            <person name="Grocock R."/>
            <person name="Hafez N."/>
            <person name="Hagopian D.S."/>
            <person name="Hart E."/>
            <person name="Norman C.H."/>
            <person name="Humphray S."/>
            <person name="Jaffe D.B."/>
            <person name="Jones M."/>
            <person name="Kamal M."/>
            <person name="Khodiyar V.K."/>
            <person name="LaButti K."/>
            <person name="Laird G."/>
            <person name="Lehoczky J."/>
            <person name="Liu X."/>
            <person name="Lokyitsang T."/>
            <person name="Loveland J."/>
            <person name="Lui A."/>
            <person name="Macdonald P."/>
            <person name="Major J.E."/>
            <person name="Matthews L."/>
            <person name="Mauceli E."/>
            <person name="McCarroll S.A."/>
            <person name="Mihalev A.H."/>
            <person name="Mudge J."/>
            <person name="Nguyen C."/>
            <person name="Nicol R."/>
            <person name="O'Leary S.B."/>
            <person name="Osoegawa K."/>
            <person name="Schwartz D.C."/>
            <person name="Shaw-Smith C."/>
            <person name="Stankiewicz P."/>
            <person name="Steward C."/>
            <person name="Swarbreck D."/>
            <person name="Venkataraman V."/>
            <person name="Whittaker C.A."/>
            <person name="Yang X."/>
            <person name="Zimmer A.R."/>
            <person name="Bradley A."/>
            <person name="Hubbard T."/>
            <person name="Birren B.W."/>
            <person name="Rogers J."/>
            <person name="Lander E.S."/>
            <person name="Nusbaum C."/>
        </authorList>
    </citation>
    <scope>NUCLEOTIDE SEQUENCE [LARGE SCALE GENOMIC DNA]</scope>
</reference>
<reference key="4">
    <citation type="journal article" date="2004" name="Genome Res.">
        <title>The status, quality, and expansion of the NIH full-length cDNA project: the Mammalian Gene Collection (MGC).</title>
        <authorList>
            <consortium name="The MGC Project Team"/>
        </authorList>
    </citation>
    <scope>NUCLEOTIDE SEQUENCE [LARGE SCALE MRNA]</scope>
    <scope>VARIANT SER-1814</scope>
    <source>
        <tissue>Cerebellum</tissue>
    </source>
</reference>
<reference key="5">
    <citation type="journal article" date="2010" name="Sci. Signal.">
        <title>Quantitative phosphoproteomics reveals widespread full phosphorylation site occupancy during mitosis.</title>
        <authorList>
            <person name="Olsen J.V."/>
            <person name="Vermeulen M."/>
            <person name="Santamaria A."/>
            <person name="Kumar C."/>
            <person name="Miller M.L."/>
            <person name="Jensen L.J."/>
            <person name="Gnad F."/>
            <person name="Cox J."/>
            <person name="Jensen T.S."/>
            <person name="Nigg E.A."/>
            <person name="Brunak S."/>
            <person name="Mann M."/>
        </authorList>
    </citation>
    <scope>PHOSPHORYLATION [LARGE SCALE ANALYSIS] AT SER-1799</scope>
    <scope>IDENTIFICATION BY MASS SPECTROMETRY [LARGE SCALE ANALYSIS]</scope>
    <source>
        <tissue>Cervix carcinoma</tissue>
    </source>
</reference>
<reference key="6">
    <citation type="journal article" date="2013" name="J. Proteome Res.">
        <title>Toward a comprehensive characterization of a human cancer cell phosphoproteome.</title>
        <authorList>
            <person name="Zhou H."/>
            <person name="Di Palma S."/>
            <person name="Preisinger C."/>
            <person name="Peng M."/>
            <person name="Polat A.N."/>
            <person name="Heck A.J."/>
            <person name="Mohammed S."/>
        </authorList>
    </citation>
    <scope>PHOSPHORYLATION [LARGE SCALE ANALYSIS] AT SER-2025</scope>
    <scope>IDENTIFICATION BY MASS SPECTROMETRY [LARGE SCALE ANALYSIS]</scope>
    <source>
        <tissue>Cervix carcinoma</tissue>
    </source>
</reference>
<gene>
    <name type="primary">EVPL</name>
</gene>
<organism>
    <name type="scientific">Homo sapiens</name>
    <name type="common">Human</name>
    <dbReference type="NCBI Taxonomy" id="9606"/>
    <lineage>
        <taxon>Eukaryota</taxon>
        <taxon>Metazoa</taxon>
        <taxon>Chordata</taxon>
        <taxon>Craniata</taxon>
        <taxon>Vertebrata</taxon>
        <taxon>Euteleostomi</taxon>
        <taxon>Mammalia</taxon>
        <taxon>Eutheria</taxon>
        <taxon>Euarchontoglires</taxon>
        <taxon>Primates</taxon>
        <taxon>Haplorrhini</taxon>
        <taxon>Catarrhini</taxon>
        <taxon>Hominidae</taxon>
        <taxon>Homo</taxon>
    </lineage>
</organism>
<name>EVPL_HUMAN</name>
<feature type="chain" id="PRO_0000078147" description="Envoplakin">
    <location>
        <begin position="1"/>
        <end position="2033"/>
    </location>
</feature>
<feature type="repeat" description="Spectrin">
    <location>
        <begin position="229"/>
        <end position="330"/>
    </location>
</feature>
<feature type="domain" description="SH3" evidence="3">
    <location>
        <begin position="413"/>
        <end position="470"/>
    </location>
</feature>
<feature type="repeat" description="Plectin 1">
    <location>
        <begin position="1185"/>
        <end position="1226"/>
    </location>
</feature>
<feature type="repeat" description="Plectin 2">
    <location>
        <begin position="1678"/>
        <end position="1713"/>
    </location>
</feature>
<feature type="repeat" description="Plectin 3">
    <location>
        <begin position="1818"/>
        <end position="1855"/>
    </location>
</feature>
<feature type="repeat" description="Plectin 4">
    <location>
        <begin position="1856"/>
        <end position="1893"/>
    </location>
</feature>
<feature type="repeat" description="Plectin 5">
    <location>
        <begin position="1894"/>
        <end position="1931"/>
    </location>
</feature>
<feature type="repeat" description="Plectin 6">
    <location>
        <begin position="1932"/>
        <end position="1969"/>
    </location>
</feature>
<feature type="repeat" description="Plectin 7">
    <location>
        <begin position="1970"/>
        <end position="2007"/>
    </location>
</feature>
<feature type="region of interest" description="Globular 1">
    <location>
        <begin position="1"/>
        <end position="841"/>
    </location>
</feature>
<feature type="region of interest" description="Disordered" evidence="4">
    <location>
        <begin position="1"/>
        <end position="37"/>
    </location>
</feature>
<feature type="region of interest" description="4 X 4 AA tandem repeats of K-G-S-P">
    <location>
        <begin position="12"/>
        <end position="28"/>
    </location>
</feature>
<feature type="region of interest" description="Disordered" evidence="4">
    <location>
        <begin position="65"/>
        <end position="85"/>
    </location>
</feature>
<feature type="region of interest" description="Disordered" evidence="4">
    <location>
        <begin position="388"/>
        <end position="418"/>
    </location>
</feature>
<feature type="region of interest" description="Central fibrous rod domain">
    <location>
        <begin position="842"/>
        <end position="1673"/>
    </location>
</feature>
<feature type="region of interest" description="Disordered" evidence="4">
    <location>
        <begin position="891"/>
        <end position="916"/>
    </location>
</feature>
<feature type="region of interest" description="Disordered" evidence="4">
    <location>
        <begin position="1614"/>
        <end position="1636"/>
    </location>
</feature>
<feature type="region of interest" description="Globular 2">
    <location>
        <begin position="1674"/>
        <end position="2033"/>
    </location>
</feature>
<feature type="coiled-coil region" evidence="2">
    <location>
        <begin position="845"/>
        <end position="1135"/>
    </location>
</feature>
<feature type="compositionally biased region" description="Low complexity" evidence="4">
    <location>
        <begin position="1"/>
        <end position="27"/>
    </location>
</feature>
<feature type="compositionally biased region" description="Polar residues" evidence="4">
    <location>
        <begin position="71"/>
        <end position="84"/>
    </location>
</feature>
<feature type="compositionally biased region" description="Basic and acidic residues" evidence="4">
    <location>
        <begin position="388"/>
        <end position="401"/>
    </location>
</feature>
<feature type="compositionally biased region" description="Basic and acidic residues" evidence="4">
    <location>
        <begin position="891"/>
        <end position="902"/>
    </location>
</feature>
<feature type="compositionally biased region" description="Low complexity" evidence="4">
    <location>
        <begin position="1614"/>
        <end position="1623"/>
    </location>
</feature>
<feature type="modified residue" description="Phosphoserine" evidence="1">
    <location>
        <position position="1575"/>
    </location>
</feature>
<feature type="modified residue" description="Phosphoserine" evidence="7">
    <location>
        <position position="1799"/>
    </location>
</feature>
<feature type="modified residue" description="Phosphoserine" evidence="8">
    <location>
        <position position="2025"/>
    </location>
</feature>
<feature type="sequence variant" id="VAR_024579" description="In dbSNP:rs397833081.">
    <original>N</original>
    <variation>S</variation>
    <location>
        <position position="49"/>
    </location>
</feature>
<feature type="sequence variant" id="VAR_057698" description="In dbSNP:rs10445216.">
    <original>Y</original>
    <variation>C</variation>
    <location>
        <position position="168"/>
    </location>
</feature>
<feature type="sequence variant" id="VAR_033863" description="In dbSNP:rs2071192.">
    <original>Q</original>
    <variation>R</variation>
    <location>
        <position position="433"/>
    </location>
</feature>
<feature type="sequence variant" id="VAR_057699" description="In dbSNP:rs7342883." evidence="5">
    <original>P</original>
    <variation>S</variation>
    <location>
        <position position="1814"/>
    </location>
</feature>
<feature type="sequence conflict" description="In Ref. 1; AAC64662 and 2; AAD00186." evidence="6" ref="1 2">
    <original>D</original>
    <variation>E</variation>
    <location>
        <position position="444"/>
    </location>
</feature>
<feature type="strand" evidence="9">
    <location>
        <begin position="1829"/>
        <end position="1832"/>
    </location>
</feature>
<feature type="turn" evidence="9">
    <location>
        <begin position="1833"/>
        <end position="1836"/>
    </location>
</feature>
<feature type="strand" evidence="9">
    <location>
        <begin position="1837"/>
        <end position="1839"/>
    </location>
</feature>
<feature type="helix" evidence="9">
    <location>
        <begin position="1841"/>
        <end position="1846"/>
    </location>
</feature>
<feature type="helix" evidence="9">
    <location>
        <begin position="1852"/>
        <end position="1863"/>
    </location>
</feature>
<feature type="turn" evidence="9">
    <location>
        <begin position="1864"/>
        <end position="1866"/>
    </location>
</feature>
<feature type="strand" evidence="9">
    <location>
        <begin position="1867"/>
        <end position="1869"/>
    </location>
</feature>
<feature type="turn" evidence="9">
    <location>
        <begin position="1871"/>
        <end position="1873"/>
    </location>
</feature>
<feature type="helix" evidence="9">
    <location>
        <begin position="1879"/>
        <end position="1884"/>
    </location>
</feature>
<feature type="helix" evidence="9">
    <location>
        <begin position="1890"/>
        <end position="1892"/>
    </location>
</feature>
<feature type="helix" evidence="9">
    <location>
        <begin position="1893"/>
        <end position="1904"/>
    </location>
</feature>
<feature type="turn" evidence="9">
    <location>
        <begin position="1909"/>
        <end position="1911"/>
    </location>
</feature>
<feature type="helix" evidence="9">
    <location>
        <begin position="1917"/>
        <end position="1922"/>
    </location>
</feature>
<feature type="helix" evidence="9">
    <location>
        <begin position="1928"/>
        <end position="1940"/>
    </location>
</feature>
<feature type="helix" evidence="9">
    <location>
        <begin position="1955"/>
        <end position="1960"/>
    </location>
</feature>
<feature type="helix" evidence="9">
    <location>
        <begin position="1966"/>
        <end position="1973"/>
    </location>
</feature>
<feature type="helix" evidence="9">
    <location>
        <begin position="1975"/>
        <end position="1977"/>
    </location>
</feature>
<feature type="turn" evidence="9">
    <location>
        <begin position="1985"/>
        <end position="1987"/>
    </location>
</feature>
<feature type="helix" evidence="9">
    <location>
        <begin position="1993"/>
        <end position="1999"/>
    </location>
</feature>
<feature type="turn" evidence="9">
    <location>
        <begin position="2004"/>
        <end position="2006"/>
    </location>
</feature>
<feature type="strand" evidence="9">
    <location>
        <begin position="2009"/>
        <end position="2013"/>
    </location>
</feature>
<evidence type="ECO:0000250" key="1">
    <source>
        <dbReference type="UniProtKB" id="Q9D952"/>
    </source>
</evidence>
<evidence type="ECO:0000255" key="2"/>
<evidence type="ECO:0000255" key="3">
    <source>
        <dbReference type="PROSITE-ProRule" id="PRU00192"/>
    </source>
</evidence>
<evidence type="ECO:0000256" key="4">
    <source>
        <dbReference type="SAM" id="MobiDB-lite"/>
    </source>
</evidence>
<evidence type="ECO:0000269" key="5">
    <source>
    </source>
</evidence>
<evidence type="ECO:0000305" key="6"/>
<evidence type="ECO:0007744" key="7">
    <source>
    </source>
</evidence>
<evidence type="ECO:0007744" key="8">
    <source>
    </source>
</evidence>
<evidence type="ECO:0007829" key="9">
    <source>
        <dbReference type="PDB" id="4QMD"/>
    </source>
</evidence>
<comment type="function">
    <text>Component of the cornified envelope of keratinocytes. May link the cornified envelope to desmosomes and intermediate filaments.</text>
</comment>
<comment type="subunit">
    <text>May form a homodimer or a heterodimer with PPL.</text>
</comment>
<comment type="subcellular location">
    <subcellularLocation>
        <location>Cell junction</location>
        <location>Desmosome</location>
    </subcellularLocation>
    <subcellularLocation>
        <location>Cornified envelope</location>
    </subcellularLocation>
    <subcellularLocation>
        <location>Cytoplasm</location>
        <location>Cytoskeleton</location>
    </subcellularLocation>
    <text>Colocalized with DSP at desmosomes and along intermediate filaments.</text>
</comment>
<comment type="tissue specificity">
    <text>Exclusively expressed in stratified squamous epithelia.</text>
</comment>
<comment type="induction">
    <text>During differentiation of epidermal keratinocytes.</text>
</comment>
<comment type="similarity">
    <text evidence="6">Belongs to the plakin or cytolinker family.</text>
</comment>
<accession>Q92817</accession>
<accession>A0AUV5</accession>
<proteinExistence type="evidence at protein level"/>